<dbReference type="EMBL" id="AB007638">
    <property type="protein sequence ID" value="BAA22773.1"/>
    <property type="molecule type" value="Genomic_DNA"/>
</dbReference>
<dbReference type="EMBL" id="AL009126">
    <property type="protein sequence ID" value="CAB12448.1"/>
    <property type="molecule type" value="Genomic_DNA"/>
</dbReference>
<dbReference type="EMBL" id="U51115">
    <property type="protein sequence ID" value="AAB62304.1"/>
    <property type="molecule type" value="Genomic_DNA"/>
</dbReference>
<dbReference type="PIR" id="A69791">
    <property type="entry name" value="A69791"/>
</dbReference>
<dbReference type="RefSeq" id="NP_388510.1">
    <property type="nucleotide sequence ID" value="NC_000964.3"/>
</dbReference>
<dbReference type="RefSeq" id="WP_003243701.1">
    <property type="nucleotide sequence ID" value="NZ_OZ025638.1"/>
</dbReference>
<dbReference type="SMR" id="O34803"/>
<dbReference type="FunCoup" id="O34803">
    <property type="interactions" value="44"/>
</dbReference>
<dbReference type="STRING" id="224308.BSU06290"/>
<dbReference type="PaxDb" id="224308-BSU06290"/>
<dbReference type="EnsemblBacteria" id="CAB12448">
    <property type="protein sequence ID" value="CAB12448"/>
    <property type="gene ID" value="BSU_06290"/>
</dbReference>
<dbReference type="GeneID" id="936018"/>
<dbReference type="KEGG" id="bsu:BSU06290"/>
<dbReference type="PATRIC" id="fig|224308.179.peg.682"/>
<dbReference type="eggNOG" id="ENOG502Z8IC">
    <property type="taxonomic scope" value="Bacteria"/>
</dbReference>
<dbReference type="InParanoid" id="O34803"/>
<dbReference type="OrthoDB" id="1778393at2"/>
<dbReference type="PhylomeDB" id="O34803"/>
<dbReference type="BioCyc" id="BSUB:BSU06290-MONOMER"/>
<dbReference type="Proteomes" id="UP000001570">
    <property type="component" value="Chromosome"/>
</dbReference>
<dbReference type="InterPro" id="IPR025062">
    <property type="entry name" value="DUF4003"/>
</dbReference>
<dbReference type="Pfam" id="PF13170">
    <property type="entry name" value="DUF4003"/>
    <property type="match status" value="1"/>
</dbReference>
<protein>
    <recommendedName>
        <fullName>Uncharacterized protein YeaA</fullName>
    </recommendedName>
</protein>
<name>YEAA_BACSU</name>
<feature type="chain" id="PRO_0000375816" description="Uncharacterized protein YeaA">
    <location>
        <begin position="1"/>
        <end position="329"/>
    </location>
</feature>
<feature type="sequence conflict" description="In Ref. 3; AAB62304." evidence="1" ref="3">
    <original>L</original>
    <variation>H</variation>
    <location>
        <position position="36"/>
    </location>
</feature>
<feature type="sequence conflict" description="In Ref. 3; AAB62304." evidence="1" ref="3">
    <original>RDMFTYL</original>
    <variation>AGYVHIP</variation>
    <location>
        <begin position="111"/>
        <end position="117"/>
    </location>
</feature>
<feature type="sequence conflict" description="In Ref. 3; AAB62304." evidence="1" ref="3">
    <original>H</original>
    <variation>Y</variation>
    <location>
        <position position="201"/>
    </location>
</feature>
<reference key="1">
    <citation type="journal article" date="1997" name="DNA Res.">
        <title>Sequence analysis of the groESL-cotA region of the Bacillus subtilis genome, containing the restriction/modification system genes.</title>
        <authorList>
            <person name="Kasahara Y."/>
            <person name="Nakai S."/>
            <person name="Ogasawara N."/>
            <person name="Yata K."/>
            <person name="Sadaie Y."/>
        </authorList>
    </citation>
    <scope>NUCLEOTIDE SEQUENCE [GENOMIC DNA]</scope>
    <source>
        <strain>168 / Marburg / ATCC 6051 / DSM 10 / JCM 1465 / NBRC 13719 / NCIMB 3610 / NRRL NRS-744 / VKM B-501</strain>
    </source>
</reference>
<reference key="2">
    <citation type="journal article" date="1997" name="Nature">
        <title>The complete genome sequence of the Gram-positive bacterium Bacillus subtilis.</title>
        <authorList>
            <person name="Kunst F."/>
            <person name="Ogasawara N."/>
            <person name="Moszer I."/>
            <person name="Albertini A.M."/>
            <person name="Alloni G."/>
            <person name="Azevedo V."/>
            <person name="Bertero M.G."/>
            <person name="Bessieres P."/>
            <person name="Bolotin A."/>
            <person name="Borchert S."/>
            <person name="Borriss R."/>
            <person name="Boursier L."/>
            <person name="Brans A."/>
            <person name="Braun M."/>
            <person name="Brignell S.C."/>
            <person name="Bron S."/>
            <person name="Brouillet S."/>
            <person name="Bruschi C.V."/>
            <person name="Caldwell B."/>
            <person name="Capuano V."/>
            <person name="Carter N.M."/>
            <person name="Choi S.-K."/>
            <person name="Codani J.-J."/>
            <person name="Connerton I.F."/>
            <person name="Cummings N.J."/>
            <person name="Daniel R.A."/>
            <person name="Denizot F."/>
            <person name="Devine K.M."/>
            <person name="Duesterhoeft A."/>
            <person name="Ehrlich S.D."/>
            <person name="Emmerson P.T."/>
            <person name="Entian K.-D."/>
            <person name="Errington J."/>
            <person name="Fabret C."/>
            <person name="Ferrari E."/>
            <person name="Foulger D."/>
            <person name="Fritz C."/>
            <person name="Fujita M."/>
            <person name="Fujita Y."/>
            <person name="Fuma S."/>
            <person name="Galizzi A."/>
            <person name="Galleron N."/>
            <person name="Ghim S.-Y."/>
            <person name="Glaser P."/>
            <person name="Goffeau A."/>
            <person name="Golightly E.J."/>
            <person name="Grandi G."/>
            <person name="Guiseppi G."/>
            <person name="Guy B.J."/>
            <person name="Haga K."/>
            <person name="Haiech J."/>
            <person name="Harwood C.R."/>
            <person name="Henaut A."/>
            <person name="Hilbert H."/>
            <person name="Holsappel S."/>
            <person name="Hosono S."/>
            <person name="Hullo M.-F."/>
            <person name="Itaya M."/>
            <person name="Jones L.-M."/>
            <person name="Joris B."/>
            <person name="Karamata D."/>
            <person name="Kasahara Y."/>
            <person name="Klaerr-Blanchard M."/>
            <person name="Klein C."/>
            <person name="Kobayashi Y."/>
            <person name="Koetter P."/>
            <person name="Koningstein G."/>
            <person name="Krogh S."/>
            <person name="Kumano M."/>
            <person name="Kurita K."/>
            <person name="Lapidus A."/>
            <person name="Lardinois S."/>
            <person name="Lauber J."/>
            <person name="Lazarevic V."/>
            <person name="Lee S.-M."/>
            <person name="Levine A."/>
            <person name="Liu H."/>
            <person name="Masuda S."/>
            <person name="Mauel C."/>
            <person name="Medigue C."/>
            <person name="Medina N."/>
            <person name="Mellado R.P."/>
            <person name="Mizuno M."/>
            <person name="Moestl D."/>
            <person name="Nakai S."/>
            <person name="Noback M."/>
            <person name="Noone D."/>
            <person name="O'Reilly M."/>
            <person name="Ogawa K."/>
            <person name="Ogiwara A."/>
            <person name="Oudega B."/>
            <person name="Park S.-H."/>
            <person name="Parro V."/>
            <person name="Pohl T.M."/>
            <person name="Portetelle D."/>
            <person name="Porwollik S."/>
            <person name="Prescott A.M."/>
            <person name="Presecan E."/>
            <person name="Pujic P."/>
            <person name="Purnelle B."/>
            <person name="Rapoport G."/>
            <person name="Rey M."/>
            <person name="Reynolds S."/>
            <person name="Rieger M."/>
            <person name="Rivolta C."/>
            <person name="Rocha E."/>
            <person name="Roche B."/>
            <person name="Rose M."/>
            <person name="Sadaie Y."/>
            <person name="Sato T."/>
            <person name="Scanlan E."/>
            <person name="Schleich S."/>
            <person name="Schroeter R."/>
            <person name="Scoffone F."/>
            <person name="Sekiguchi J."/>
            <person name="Sekowska A."/>
            <person name="Seror S.J."/>
            <person name="Serror P."/>
            <person name="Shin B.-S."/>
            <person name="Soldo B."/>
            <person name="Sorokin A."/>
            <person name="Tacconi E."/>
            <person name="Takagi T."/>
            <person name="Takahashi H."/>
            <person name="Takemaru K."/>
            <person name="Takeuchi M."/>
            <person name="Tamakoshi A."/>
            <person name="Tanaka T."/>
            <person name="Terpstra P."/>
            <person name="Tognoni A."/>
            <person name="Tosato V."/>
            <person name="Uchiyama S."/>
            <person name="Vandenbol M."/>
            <person name="Vannier F."/>
            <person name="Vassarotti A."/>
            <person name="Viari A."/>
            <person name="Wambutt R."/>
            <person name="Wedler E."/>
            <person name="Wedler H."/>
            <person name="Weitzenegger T."/>
            <person name="Winters P."/>
            <person name="Wipat A."/>
            <person name="Yamamoto H."/>
            <person name="Yamane K."/>
            <person name="Yasumoto K."/>
            <person name="Yata K."/>
            <person name="Yoshida K."/>
            <person name="Yoshikawa H.-F."/>
            <person name="Zumstein E."/>
            <person name="Yoshikawa H."/>
            <person name="Danchin A."/>
        </authorList>
    </citation>
    <scope>NUCLEOTIDE SEQUENCE [LARGE SCALE GENOMIC DNA]</scope>
    <source>
        <strain>168</strain>
    </source>
</reference>
<reference key="3">
    <citation type="journal article" date="1996" name="Microbiology">
        <title>The 52 degrees-55 degrees segment of the Bacillus subtilis chromosome: a region devoted to purine uptake and metabolism, and containing the genes cotA, gabP and guaA and the pur gene cluster within a 34960 bp nucleotide sequence.</title>
        <authorList>
            <person name="Borriss R."/>
            <person name="Porwollik S."/>
            <person name="Schroeter R."/>
        </authorList>
    </citation>
    <scope>NUCLEOTIDE SEQUENCE [GENOMIC DNA] OF 1-266</scope>
    <source>
        <strain>168</strain>
    </source>
</reference>
<keyword id="KW-1185">Reference proteome</keyword>
<gene>
    <name type="primary">yeaA</name>
    <name type="synonym">ydjQ</name>
    <name type="ordered locus">BSU06290</name>
</gene>
<evidence type="ECO:0000305" key="1"/>
<sequence length="329" mass="37731">MLTHDLHEKTKHYISIYAELKTKLKWKVSHDQILMLISSAYIVNKREFDFQRFYDLSSYIKSNIGSFSTLNSHHRFTVASILDIHFQHEAKQTFQTFIDVYNEMVKLGYKRDMFTYLSALILLTGKSETTNQKEQMNMGLAVYQQMKKNHYFLTSTQNVPLAVLLGENGKGLQALQKAETCYQLLAANGFKKGQYLHQVSHILALQSEKEPEMLVSACKQIYQSITESVKKTKDYHYPDLALLTFLEEPDIKTVLCITDELNQEKAFKWQKEMNFKIAVSLYLSEHMEKNLLMESGLYTAIETVIQAQQAAATAAIISSTAASHTHDGN</sequence>
<proteinExistence type="predicted"/>
<accession>O34803</accession>
<accession>P94472</accession>
<accession>Q797B8</accession>
<organism>
    <name type="scientific">Bacillus subtilis (strain 168)</name>
    <dbReference type="NCBI Taxonomy" id="224308"/>
    <lineage>
        <taxon>Bacteria</taxon>
        <taxon>Bacillati</taxon>
        <taxon>Bacillota</taxon>
        <taxon>Bacilli</taxon>
        <taxon>Bacillales</taxon>
        <taxon>Bacillaceae</taxon>
        <taxon>Bacillus</taxon>
    </lineage>
</organism>